<protein>
    <recommendedName>
        <fullName evidence="2">UPF0761 membrane protein YihY</fullName>
    </recommendedName>
</protein>
<sequence>MLKTVHQKAGRHTRPVRAWLKLLWQRIDEDNMTTLAGNLAYVSLLSLVPLIAVVFALFAAFPMFSDVSIQLRHFIFANFMPATGDVIQRYIEQFVANSNKMTAVGACGLIVTALLLMYAIDSALNTIWRSKRTRPKVYSFAVYWMILTLGPLLAGASLAISSYLLSLRWASDLNTVIDNVLRILPLLLSWISFWLLYSIVPTTRVPNRDALVGAFVAALLFEAGKKGFALYITMFPSYQLIYGVLAVIPILFVWVYWTWCIVLLGAEITVTLGEYRKLKQAAEQEEADQP</sequence>
<name>YIHY_SALTI</name>
<reference key="1">
    <citation type="journal article" date="2001" name="Nature">
        <title>Complete genome sequence of a multiple drug resistant Salmonella enterica serovar Typhi CT18.</title>
        <authorList>
            <person name="Parkhill J."/>
            <person name="Dougan G."/>
            <person name="James K.D."/>
            <person name="Thomson N.R."/>
            <person name="Pickard D."/>
            <person name="Wain J."/>
            <person name="Churcher C.M."/>
            <person name="Mungall K.L."/>
            <person name="Bentley S.D."/>
            <person name="Holden M.T.G."/>
            <person name="Sebaihia M."/>
            <person name="Baker S."/>
            <person name="Basham D."/>
            <person name="Brooks K."/>
            <person name="Chillingworth T."/>
            <person name="Connerton P."/>
            <person name="Cronin A."/>
            <person name="Davis P."/>
            <person name="Davies R.M."/>
            <person name="Dowd L."/>
            <person name="White N."/>
            <person name="Farrar J."/>
            <person name="Feltwell T."/>
            <person name="Hamlin N."/>
            <person name="Haque A."/>
            <person name="Hien T.T."/>
            <person name="Holroyd S."/>
            <person name="Jagels K."/>
            <person name="Krogh A."/>
            <person name="Larsen T.S."/>
            <person name="Leather S."/>
            <person name="Moule S."/>
            <person name="O'Gaora P."/>
            <person name="Parry C."/>
            <person name="Quail M.A."/>
            <person name="Rutherford K.M."/>
            <person name="Simmonds M."/>
            <person name="Skelton J."/>
            <person name="Stevens K."/>
            <person name="Whitehead S."/>
            <person name="Barrell B.G."/>
        </authorList>
    </citation>
    <scope>NUCLEOTIDE SEQUENCE [LARGE SCALE GENOMIC DNA]</scope>
    <source>
        <strain>CT18</strain>
    </source>
</reference>
<reference key="2">
    <citation type="journal article" date="2003" name="J. Bacteriol.">
        <title>Comparative genomics of Salmonella enterica serovar Typhi strains Ty2 and CT18.</title>
        <authorList>
            <person name="Deng W."/>
            <person name="Liou S.-R."/>
            <person name="Plunkett G. III"/>
            <person name="Mayhew G.F."/>
            <person name="Rose D.J."/>
            <person name="Burland V."/>
            <person name="Kodoyianni V."/>
            <person name="Schwartz D.C."/>
            <person name="Blattner F.R."/>
        </authorList>
    </citation>
    <scope>NUCLEOTIDE SEQUENCE [LARGE SCALE GENOMIC DNA]</scope>
    <source>
        <strain>ATCC 700931 / Ty2</strain>
    </source>
</reference>
<accession>Q8Z2T8</accession>
<dbReference type="EMBL" id="AL513382">
    <property type="protein sequence ID" value="CAD09599.1"/>
    <property type="molecule type" value="Genomic_DNA"/>
</dbReference>
<dbReference type="EMBL" id="AE014613">
    <property type="protein sequence ID" value="AAO71097.1"/>
    <property type="molecule type" value="Genomic_DNA"/>
</dbReference>
<dbReference type="RefSeq" id="NP_458024.1">
    <property type="nucleotide sequence ID" value="NC_003198.1"/>
</dbReference>
<dbReference type="RefSeq" id="WP_000921423.1">
    <property type="nucleotide sequence ID" value="NZ_WSUR01000010.1"/>
</dbReference>
<dbReference type="STRING" id="220341.gene:17587710"/>
<dbReference type="KEGG" id="stt:t3594"/>
<dbReference type="KEGG" id="sty:STY3851"/>
<dbReference type="PATRIC" id="fig|220341.7.peg.3931"/>
<dbReference type="eggNOG" id="COG1295">
    <property type="taxonomic scope" value="Bacteria"/>
</dbReference>
<dbReference type="HOGENOM" id="CLU_032288_0_0_6"/>
<dbReference type="OMA" id="KQPKFRW"/>
<dbReference type="OrthoDB" id="9808671at2"/>
<dbReference type="Proteomes" id="UP000000541">
    <property type="component" value="Chromosome"/>
</dbReference>
<dbReference type="Proteomes" id="UP000002670">
    <property type="component" value="Chromosome"/>
</dbReference>
<dbReference type="GO" id="GO:0005886">
    <property type="term" value="C:plasma membrane"/>
    <property type="evidence" value="ECO:0007669"/>
    <property type="project" value="UniProtKB-SubCell"/>
</dbReference>
<dbReference type="HAMAP" id="MF_00672">
    <property type="entry name" value="UPF0761"/>
    <property type="match status" value="1"/>
</dbReference>
<dbReference type="InterPro" id="IPR023679">
    <property type="entry name" value="UPF0761_bac"/>
</dbReference>
<dbReference type="InterPro" id="IPR017039">
    <property type="entry name" value="Virul_fac_BrkB"/>
</dbReference>
<dbReference type="NCBIfam" id="NF002457">
    <property type="entry name" value="PRK01637.1"/>
    <property type="match status" value="1"/>
</dbReference>
<dbReference type="NCBIfam" id="TIGR00765">
    <property type="entry name" value="yihY_not_rbn"/>
    <property type="match status" value="1"/>
</dbReference>
<dbReference type="PANTHER" id="PTHR30213">
    <property type="entry name" value="INNER MEMBRANE PROTEIN YHJD"/>
    <property type="match status" value="1"/>
</dbReference>
<dbReference type="PANTHER" id="PTHR30213:SF0">
    <property type="entry name" value="UPF0761 MEMBRANE PROTEIN YIHY"/>
    <property type="match status" value="1"/>
</dbReference>
<dbReference type="Pfam" id="PF03631">
    <property type="entry name" value="Virul_fac_BrkB"/>
    <property type="match status" value="1"/>
</dbReference>
<dbReference type="PIRSF" id="PIRSF035875">
    <property type="entry name" value="RNase_BN"/>
    <property type="match status" value="1"/>
</dbReference>
<evidence type="ECO:0000255" key="1"/>
<evidence type="ECO:0000255" key="2">
    <source>
        <dbReference type="HAMAP-Rule" id="MF_00672"/>
    </source>
</evidence>
<comment type="subcellular location">
    <subcellularLocation>
        <location evidence="2">Cell inner membrane</location>
        <topology evidence="2">Multi-pass membrane protein</topology>
    </subcellularLocation>
</comment>
<comment type="similarity">
    <text evidence="2">Belongs to the UPF0761 family.</text>
</comment>
<proteinExistence type="inferred from homology"/>
<organism>
    <name type="scientific">Salmonella typhi</name>
    <dbReference type="NCBI Taxonomy" id="90370"/>
    <lineage>
        <taxon>Bacteria</taxon>
        <taxon>Pseudomonadati</taxon>
        <taxon>Pseudomonadota</taxon>
        <taxon>Gammaproteobacteria</taxon>
        <taxon>Enterobacterales</taxon>
        <taxon>Enterobacteriaceae</taxon>
        <taxon>Salmonella</taxon>
    </lineage>
</organism>
<feature type="chain" id="PRO_0000200994" description="UPF0761 membrane protein YihY">
    <location>
        <begin position="1"/>
        <end position="290"/>
    </location>
</feature>
<feature type="topological domain" description="Cytoplasmic" evidence="1">
    <location>
        <begin position="1"/>
        <end position="43"/>
    </location>
</feature>
<feature type="transmembrane region" description="Helical" evidence="2">
    <location>
        <begin position="44"/>
        <end position="64"/>
    </location>
</feature>
<feature type="topological domain" description="Periplasmic" evidence="1">
    <location>
        <begin position="65"/>
        <end position="103"/>
    </location>
</feature>
<feature type="transmembrane region" description="Helical" evidence="2">
    <location>
        <begin position="104"/>
        <end position="124"/>
    </location>
</feature>
<feature type="topological domain" description="Cytoplasmic" evidence="1">
    <location>
        <begin position="125"/>
        <end position="139"/>
    </location>
</feature>
<feature type="transmembrane region" description="Helical" evidence="2">
    <location>
        <begin position="140"/>
        <end position="160"/>
    </location>
</feature>
<feature type="topological domain" description="Periplasmic" evidence="1">
    <location>
        <begin position="161"/>
        <end position="182"/>
    </location>
</feature>
<feature type="transmembrane region" description="Helical" evidence="2">
    <location>
        <begin position="183"/>
        <end position="203"/>
    </location>
</feature>
<feature type="topological domain" description="Cytoplasmic" evidence="1">
    <location>
        <begin position="204"/>
        <end position="209"/>
    </location>
</feature>
<feature type="transmembrane region" description="Helical" evidence="2">
    <location>
        <begin position="210"/>
        <end position="230"/>
    </location>
</feature>
<feature type="topological domain" description="Periplasmic" evidence="1">
    <location>
        <begin position="231"/>
        <end position="243"/>
    </location>
</feature>
<feature type="transmembrane region" description="Helical" evidence="2">
    <location>
        <begin position="244"/>
        <end position="264"/>
    </location>
</feature>
<feature type="topological domain" description="Cytoplasmic" evidence="1">
    <location>
        <begin position="265"/>
        <end position="290"/>
    </location>
</feature>
<gene>
    <name evidence="2" type="primary">yihY</name>
    <name type="ordered locus">STY3851</name>
    <name type="ordered locus">t3594</name>
</gene>
<keyword id="KW-0997">Cell inner membrane</keyword>
<keyword id="KW-1003">Cell membrane</keyword>
<keyword id="KW-0472">Membrane</keyword>
<keyword id="KW-0812">Transmembrane</keyword>
<keyword id="KW-1133">Transmembrane helix</keyword>